<gene>
    <name type="primary">Clk</name>
    <name type="synonym">CLOCK</name>
    <name type="synonym">jrk</name>
    <name type="synonym">PAS1</name>
    <name type="ORF">CG7391</name>
</gene>
<name>CLOCK_DROME</name>
<organism>
    <name type="scientific">Drosophila melanogaster</name>
    <name type="common">Fruit fly</name>
    <dbReference type="NCBI Taxonomy" id="7227"/>
    <lineage>
        <taxon>Eukaryota</taxon>
        <taxon>Metazoa</taxon>
        <taxon>Ecdysozoa</taxon>
        <taxon>Arthropoda</taxon>
        <taxon>Hexapoda</taxon>
        <taxon>Insecta</taxon>
        <taxon>Pterygota</taxon>
        <taxon>Neoptera</taxon>
        <taxon>Endopterygota</taxon>
        <taxon>Diptera</taxon>
        <taxon>Brachycera</taxon>
        <taxon>Muscomorpha</taxon>
        <taxon>Ephydroidea</taxon>
        <taxon>Drosophilidae</taxon>
        <taxon>Drosophila</taxon>
        <taxon>Sophophora</taxon>
    </lineage>
</organism>
<accession>O61735</accession>
<accession>A4V1L9</accession>
<accession>A4V1M0</accession>
<accession>O76342</accession>
<accession>O77137</accession>
<accession>Q59E25</accession>
<accession>Q9VSB0</accession>
<dbReference type="EMBL" id="AF065133">
    <property type="protein sequence ID" value="AAC39101.1"/>
    <property type="molecule type" value="mRNA"/>
</dbReference>
<dbReference type="EMBL" id="AF069997">
    <property type="protein sequence ID" value="AAC62234.1"/>
    <property type="molecule type" value="mRNA"/>
</dbReference>
<dbReference type="EMBL" id="AF067207">
    <property type="protein sequence ID" value="AAD10630.1"/>
    <property type="molecule type" value="mRNA"/>
</dbReference>
<dbReference type="EMBL" id="AE014296">
    <property type="protein sequence ID" value="AAF50516.1"/>
    <property type="molecule type" value="Genomic_DNA"/>
</dbReference>
<dbReference type="EMBL" id="AE014296">
    <property type="protein sequence ID" value="AAX52753.1"/>
    <property type="molecule type" value="Genomic_DNA"/>
</dbReference>
<dbReference type="EMBL" id="AE014296">
    <property type="protein sequence ID" value="AAX52754.1"/>
    <property type="molecule type" value="Genomic_DNA"/>
</dbReference>
<dbReference type="PIR" id="T13062">
    <property type="entry name" value="T13062"/>
</dbReference>
<dbReference type="PIR" id="T13068">
    <property type="entry name" value="T13068"/>
</dbReference>
<dbReference type="PIR" id="T13071">
    <property type="entry name" value="T13071"/>
</dbReference>
<dbReference type="RefSeq" id="NP_001014574.1">
    <molecule id="O61735-3"/>
    <property type="nucleotide sequence ID" value="NM_001014574.2"/>
</dbReference>
<dbReference type="RefSeq" id="NP_001014576.1">
    <molecule id="O61735-1"/>
    <property type="nucleotide sequence ID" value="NM_001014576.2"/>
</dbReference>
<dbReference type="RefSeq" id="NP_523964.2">
    <molecule id="O61735-2"/>
    <property type="nucleotide sequence ID" value="NM_079240.3"/>
</dbReference>
<dbReference type="SMR" id="O61735"/>
<dbReference type="BioGRID" id="64302">
    <property type="interactions" value="27"/>
</dbReference>
<dbReference type="DIP" id="DIP-46595N"/>
<dbReference type="FunCoup" id="O61735">
    <property type="interactions" value="34"/>
</dbReference>
<dbReference type="IntAct" id="O61735">
    <property type="interactions" value="18"/>
</dbReference>
<dbReference type="MINT" id="O61735"/>
<dbReference type="STRING" id="7227.FBpp0099478"/>
<dbReference type="GlyGen" id="O61735">
    <property type="glycosylation" value="1 site, 1 O-linked glycan (1 site)"/>
</dbReference>
<dbReference type="iPTMnet" id="O61735"/>
<dbReference type="PaxDb" id="7227-FBpp0099478"/>
<dbReference type="EnsemblMetazoa" id="FBtr0076785">
    <molecule id="O61735-2"/>
    <property type="protein sequence ID" value="FBpp0076500"/>
    <property type="gene ID" value="FBgn0023076"/>
</dbReference>
<dbReference type="EnsemblMetazoa" id="FBtr0100132">
    <molecule id="O61735-1"/>
    <property type="protein sequence ID" value="FBpp0099478"/>
    <property type="gene ID" value="FBgn0023076"/>
</dbReference>
<dbReference type="EnsemblMetazoa" id="FBtr0100134">
    <molecule id="O61735-3"/>
    <property type="protein sequence ID" value="FBpp0099480"/>
    <property type="gene ID" value="FBgn0023076"/>
</dbReference>
<dbReference type="GeneID" id="38872"/>
<dbReference type="KEGG" id="dme:Dmel_CG7391"/>
<dbReference type="UCSC" id="CG7391-RA">
    <molecule id="O61735-1"/>
    <property type="organism name" value="d. melanogaster"/>
</dbReference>
<dbReference type="AGR" id="FB:FBgn0023076"/>
<dbReference type="CTD" id="38872"/>
<dbReference type="FlyBase" id="FBgn0023076">
    <property type="gene designation" value="Clk"/>
</dbReference>
<dbReference type="VEuPathDB" id="VectorBase:FBgn0023076"/>
<dbReference type="eggNOG" id="KOG3561">
    <property type="taxonomic scope" value="Eukaryota"/>
</dbReference>
<dbReference type="GeneTree" id="ENSGT00940000169943"/>
<dbReference type="InParanoid" id="O61735"/>
<dbReference type="OMA" id="DFELGNQ"/>
<dbReference type="OrthoDB" id="411251at2759"/>
<dbReference type="PhylomeDB" id="O61735"/>
<dbReference type="Reactome" id="R-DME-432395">
    <property type="pathway name" value="Degradation of TIM"/>
</dbReference>
<dbReference type="Reactome" id="R-DME-432408">
    <property type="pathway name" value="Transcription regulation of cwo gene"/>
</dbReference>
<dbReference type="Reactome" id="R-DME-432501">
    <property type="pathway name" value="Transcription repression by PER and activation by PDP1"/>
</dbReference>
<dbReference type="Reactome" id="R-DME-432524">
    <property type="pathway name" value="Degradation of PER"/>
</dbReference>
<dbReference type="Reactome" id="R-DME-432560">
    <property type="pathway name" value="Transcription activation by CLK:CYC and repression by VRI"/>
</dbReference>
<dbReference type="Reactome" id="R-DME-432620">
    <property type="pathway name" value="Dephosphorylation of PER"/>
</dbReference>
<dbReference type="Reactome" id="R-DME-432626">
    <property type="pathway name" value="Circadian Clock pathway"/>
</dbReference>
<dbReference type="SignaLink" id="O61735"/>
<dbReference type="BioGRID-ORCS" id="38872">
    <property type="hits" value="0 hits in 3 CRISPR screens"/>
</dbReference>
<dbReference type="GenomeRNAi" id="38872"/>
<dbReference type="PRO" id="PR:O61735"/>
<dbReference type="Proteomes" id="UP000000803">
    <property type="component" value="Chromosome 3L"/>
</dbReference>
<dbReference type="Bgee" id="FBgn0023076">
    <property type="expression patterns" value="Expressed in adult oenocyte (Drosophila) in dorsal vessel heart and 149 other cell types or tissues"/>
</dbReference>
<dbReference type="ExpressionAtlas" id="O61735">
    <property type="expression patterns" value="baseline and differential"/>
</dbReference>
<dbReference type="GO" id="GO:1990513">
    <property type="term" value="C:CLOCK-BMAL transcription complex"/>
    <property type="evidence" value="ECO:0000314"/>
    <property type="project" value="FlyBase"/>
</dbReference>
<dbReference type="GO" id="GO:0005737">
    <property type="term" value="C:cytoplasm"/>
    <property type="evidence" value="ECO:0007669"/>
    <property type="project" value="InterPro"/>
</dbReference>
<dbReference type="GO" id="GO:0005654">
    <property type="term" value="C:nucleoplasm"/>
    <property type="evidence" value="ECO:0000304"/>
    <property type="project" value="Reactome"/>
</dbReference>
<dbReference type="GO" id="GO:0005634">
    <property type="term" value="C:nucleus"/>
    <property type="evidence" value="ECO:0000303"/>
    <property type="project" value="FlyBase"/>
</dbReference>
<dbReference type="GO" id="GO:0003682">
    <property type="term" value="F:chromatin binding"/>
    <property type="evidence" value="ECO:0000314"/>
    <property type="project" value="FlyBase"/>
</dbReference>
<dbReference type="GO" id="GO:0003677">
    <property type="term" value="F:DNA binding"/>
    <property type="evidence" value="ECO:0000314"/>
    <property type="project" value="FlyBase"/>
</dbReference>
<dbReference type="GO" id="GO:0000981">
    <property type="term" value="F:DNA-binding transcription factor activity, RNA polymerase II-specific"/>
    <property type="evidence" value="ECO:0000318"/>
    <property type="project" value="GO_Central"/>
</dbReference>
<dbReference type="GO" id="GO:0046982">
    <property type="term" value="F:protein heterodimerization activity"/>
    <property type="evidence" value="ECO:0000353"/>
    <property type="project" value="FlyBase"/>
</dbReference>
<dbReference type="GO" id="GO:0000978">
    <property type="term" value="F:RNA polymerase II cis-regulatory region sequence-specific DNA binding"/>
    <property type="evidence" value="ECO:0000318"/>
    <property type="project" value="GO_Central"/>
</dbReference>
<dbReference type="GO" id="GO:0048148">
    <property type="term" value="P:behavioral response to cocaine"/>
    <property type="evidence" value="ECO:0000304"/>
    <property type="project" value="FlyBase"/>
</dbReference>
<dbReference type="GO" id="GO:0032922">
    <property type="term" value="P:circadian regulation of gene expression"/>
    <property type="evidence" value="ECO:0000314"/>
    <property type="project" value="FlyBase"/>
</dbReference>
<dbReference type="GO" id="GO:0003053">
    <property type="term" value="P:circadian regulation of heart rate"/>
    <property type="evidence" value="ECO:0000315"/>
    <property type="project" value="FlyBase"/>
</dbReference>
<dbReference type="GO" id="GO:0007623">
    <property type="term" value="P:circadian rhythm"/>
    <property type="evidence" value="ECO:0000315"/>
    <property type="project" value="UniProtKB"/>
</dbReference>
<dbReference type="GO" id="GO:0008062">
    <property type="term" value="P:eclosion rhythm"/>
    <property type="evidence" value="ECO:0000304"/>
    <property type="project" value="FlyBase"/>
</dbReference>
<dbReference type="GO" id="GO:0009649">
    <property type="term" value="P:entrainment of circadian clock"/>
    <property type="evidence" value="ECO:0000315"/>
    <property type="project" value="FlyBase"/>
</dbReference>
<dbReference type="GO" id="GO:0045475">
    <property type="term" value="P:locomotor rhythm"/>
    <property type="evidence" value="ECO:0000315"/>
    <property type="project" value="FlyBase"/>
</dbReference>
<dbReference type="GO" id="GO:0043066">
    <property type="term" value="P:negative regulation of apoptotic process"/>
    <property type="evidence" value="ECO:0000315"/>
    <property type="project" value="FlyBase"/>
</dbReference>
<dbReference type="GO" id="GO:0000122">
    <property type="term" value="P:negative regulation of transcription by RNA polymerase II"/>
    <property type="evidence" value="ECO:0000303"/>
    <property type="project" value="FlyBase"/>
</dbReference>
<dbReference type="GO" id="GO:0045893">
    <property type="term" value="P:positive regulation of DNA-templated transcription"/>
    <property type="evidence" value="ECO:0000316"/>
    <property type="project" value="UniProtKB"/>
</dbReference>
<dbReference type="GO" id="GO:0045944">
    <property type="term" value="P:positive regulation of transcription by RNA polymerase II"/>
    <property type="evidence" value="ECO:0000314"/>
    <property type="project" value="FlyBase"/>
</dbReference>
<dbReference type="GO" id="GO:0045187">
    <property type="term" value="P:regulation of circadian sleep/wake cycle, sleep"/>
    <property type="evidence" value="ECO:0000315"/>
    <property type="project" value="FlyBase"/>
</dbReference>
<dbReference type="GO" id="GO:0006357">
    <property type="term" value="P:regulation of transcription by RNA polymerase II"/>
    <property type="evidence" value="ECO:0000318"/>
    <property type="project" value="GO_Central"/>
</dbReference>
<dbReference type="GO" id="GO:0009416">
    <property type="term" value="P:response to light stimulus"/>
    <property type="evidence" value="ECO:0000314"/>
    <property type="project" value="FlyBase"/>
</dbReference>
<dbReference type="GO" id="GO:0009266">
    <property type="term" value="P:response to temperature stimulus"/>
    <property type="evidence" value="ECO:0000314"/>
    <property type="project" value="FlyBase"/>
</dbReference>
<dbReference type="GO" id="GO:0007622">
    <property type="term" value="P:rhythmic behavior"/>
    <property type="evidence" value="ECO:0000304"/>
    <property type="project" value="FlyBase"/>
</dbReference>
<dbReference type="CDD" id="cd19735">
    <property type="entry name" value="bHLH-PAS_dCLOCK"/>
    <property type="match status" value="1"/>
</dbReference>
<dbReference type="CDD" id="cd00130">
    <property type="entry name" value="PAS"/>
    <property type="match status" value="2"/>
</dbReference>
<dbReference type="FunFam" id="3.30.450.20:FF:000016">
    <property type="entry name" value="Circadian locomoter output cycles protein"/>
    <property type="match status" value="1"/>
</dbReference>
<dbReference type="FunFam" id="3.30.450.20:FF:000158">
    <property type="entry name" value="Circadian locomoter output cycles protein kaput"/>
    <property type="match status" value="1"/>
</dbReference>
<dbReference type="Gene3D" id="4.10.280.10">
    <property type="entry name" value="Helix-loop-helix DNA-binding domain"/>
    <property type="match status" value="1"/>
</dbReference>
<dbReference type="Gene3D" id="3.30.450.20">
    <property type="entry name" value="PAS domain"/>
    <property type="match status" value="2"/>
</dbReference>
<dbReference type="InterPro" id="IPR011598">
    <property type="entry name" value="bHLH_dom"/>
</dbReference>
<dbReference type="InterPro" id="IPR047230">
    <property type="entry name" value="CLOCK-like"/>
</dbReference>
<dbReference type="InterPro" id="IPR036638">
    <property type="entry name" value="HLH_DNA-bd_sf"/>
</dbReference>
<dbReference type="InterPro" id="IPR001067">
    <property type="entry name" value="Nuc_translocat"/>
</dbReference>
<dbReference type="InterPro" id="IPR001610">
    <property type="entry name" value="PAC"/>
</dbReference>
<dbReference type="InterPro" id="IPR000014">
    <property type="entry name" value="PAS"/>
</dbReference>
<dbReference type="InterPro" id="IPR035965">
    <property type="entry name" value="PAS-like_dom_sf"/>
</dbReference>
<dbReference type="PANTHER" id="PTHR46055">
    <property type="entry name" value="CIRCADIAN LOCOMOTER OUTPUT CYCLES PROTEIN KAPUT"/>
    <property type="match status" value="1"/>
</dbReference>
<dbReference type="PANTHER" id="PTHR46055:SF3">
    <property type="entry name" value="CIRCADIAN LOCOMOTER OUTPUT CYCLES PROTEIN KAPUT"/>
    <property type="match status" value="1"/>
</dbReference>
<dbReference type="Pfam" id="PF00010">
    <property type="entry name" value="HLH"/>
    <property type="match status" value="1"/>
</dbReference>
<dbReference type="Pfam" id="PF14598">
    <property type="entry name" value="PAS_11"/>
    <property type="match status" value="1"/>
</dbReference>
<dbReference type="PRINTS" id="PR00785">
    <property type="entry name" value="NCTRNSLOCATR"/>
</dbReference>
<dbReference type="SMART" id="SM00353">
    <property type="entry name" value="HLH"/>
    <property type="match status" value="1"/>
</dbReference>
<dbReference type="SMART" id="SM00086">
    <property type="entry name" value="PAC"/>
    <property type="match status" value="1"/>
</dbReference>
<dbReference type="SMART" id="SM00091">
    <property type="entry name" value="PAS"/>
    <property type="match status" value="2"/>
</dbReference>
<dbReference type="SUPFAM" id="SSF47459">
    <property type="entry name" value="HLH, helix-loop-helix DNA-binding domain"/>
    <property type="match status" value="1"/>
</dbReference>
<dbReference type="SUPFAM" id="SSF55785">
    <property type="entry name" value="PYP-like sensor domain (PAS domain)"/>
    <property type="match status" value="2"/>
</dbReference>
<dbReference type="PROSITE" id="PS50888">
    <property type="entry name" value="BHLH"/>
    <property type="match status" value="1"/>
</dbReference>
<dbReference type="PROSITE" id="PS50112">
    <property type="entry name" value="PAS"/>
    <property type="match status" value="1"/>
</dbReference>
<reference key="1">
    <citation type="journal article" date="1998" name="Cell">
        <title>A mutant Drosophila homolog of mammalian Clock disrupts circadian rhythms and transcription of period and timeless.</title>
        <authorList>
            <person name="Allada R."/>
            <person name="White N.E."/>
            <person name="So W.V."/>
            <person name="Hall J.C."/>
            <person name="Rosbash M."/>
        </authorList>
    </citation>
    <scope>NUCLEOTIDE SEQUENCE [MRNA] (ISOFORM A)</scope>
    <scope>FUNCTION</scope>
    <source>
        <tissue>Head</tissue>
    </source>
</reference>
<reference key="2">
    <citation type="journal article" date="1998" name="Mol. Cell. Biol.">
        <title>Circadian regulation of a Drosophila homolog of the mammalian clock gene: PER and TIM function as positive regulators.</title>
        <authorList>
            <person name="Bae K."/>
            <person name="Lee C."/>
            <person name="Sidote D."/>
            <person name="Chuang K.-Y."/>
            <person name="Edery I."/>
        </authorList>
    </citation>
    <scope>NUCLEOTIDE SEQUENCE [MRNA] (ISOFORM D)</scope>
    <source>
        <strain>Canton-S</strain>
    </source>
</reference>
<reference key="3">
    <citation type="journal article" date="1998" name="Science">
        <title>Closing the circadian loop: CLOCK-induced transcription of its own inhibitors per and tim.</title>
        <authorList>
            <person name="Darlington T.K."/>
            <person name="Wager-Smith K."/>
            <person name="Ceriani M.F."/>
            <person name="Staknis D."/>
            <person name="Gekakis N."/>
            <person name="Steeves T.D.L."/>
            <person name="Weitz C.J."/>
            <person name="Takahashi J.S."/>
            <person name="Kay S.A."/>
        </authorList>
    </citation>
    <scope>NUCLEOTIDE SEQUENCE [MRNA] (ISOFORM A)</scope>
    <source>
        <tissue>Head</tissue>
    </source>
</reference>
<reference key="4">
    <citation type="journal article" date="2000" name="Science">
        <title>The genome sequence of Drosophila melanogaster.</title>
        <authorList>
            <person name="Adams M.D."/>
            <person name="Celniker S.E."/>
            <person name="Holt R.A."/>
            <person name="Evans C.A."/>
            <person name="Gocayne J.D."/>
            <person name="Amanatides P.G."/>
            <person name="Scherer S.E."/>
            <person name="Li P.W."/>
            <person name="Hoskins R.A."/>
            <person name="Galle R.F."/>
            <person name="George R.A."/>
            <person name="Lewis S.E."/>
            <person name="Richards S."/>
            <person name="Ashburner M."/>
            <person name="Henderson S.N."/>
            <person name="Sutton G.G."/>
            <person name="Wortman J.R."/>
            <person name="Yandell M.D."/>
            <person name="Zhang Q."/>
            <person name="Chen L.X."/>
            <person name="Brandon R.C."/>
            <person name="Rogers Y.-H.C."/>
            <person name="Blazej R.G."/>
            <person name="Champe M."/>
            <person name="Pfeiffer B.D."/>
            <person name="Wan K.H."/>
            <person name="Doyle C."/>
            <person name="Baxter E.G."/>
            <person name="Helt G."/>
            <person name="Nelson C.R."/>
            <person name="Miklos G.L.G."/>
            <person name="Abril J.F."/>
            <person name="Agbayani A."/>
            <person name="An H.-J."/>
            <person name="Andrews-Pfannkoch C."/>
            <person name="Baldwin D."/>
            <person name="Ballew R.M."/>
            <person name="Basu A."/>
            <person name="Baxendale J."/>
            <person name="Bayraktaroglu L."/>
            <person name="Beasley E.M."/>
            <person name="Beeson K.Y."/>
            <person name="Benos P.V."/>
            <person name="Berman B.P."/>
            <person name="Bhandari D."/>
            <person name="Bolshakov S."/>
            <person name="Borkova D."/>
            <person name="Botchan M.R."/>
            <person name="Bouck J."/>
            <person name="Brokstein P."/>
            <person name="Brottier P."/>
            <person name="Burtis K.C."/>
            <person name="Busam D.A."/>
            <person name="Butler H."/>
            <person name="Cadieu E."/>
            <person name="Center A."/>
            <person name="Chandra I."/>
            <person name="Cherry J.M."/>
            <person name="Cawley S."/>
            <person name="Dahlke C."/>
            <person name="Davenport L.B."/>
            <person name="Davies P."/>
            <person name="de Pablos B."/>
            <person name="Delcher A."/>
            <person name="Deng Z."/>
            <person name="Mays A.D."/>
            <person name="Dew I."/>
            <person name="Dietz S.M."/>
            <person name="Dodson K."/>
            <person name="Doup L.E."/>
            <person name="Downes M."/>
            <person name="Dugan-Rocha S."/>
            <person name="Dunkov B.C."/>
            <person name="Dunn P."/>
            <person name="Durbin K.J."/>
            <person name="Evangelista C.C."/>
            <person name="Ferraz C."/>
            <person name="Ferriera S."/>
            <person name="Fleischmann W."/>
            <person name="Fosler C."/>
            <person name="Gabrielian A.E."/>
            <person name="Garg N.S."/>
            <person name="Gelbart W.M."/>
            <person name="Glasser K."/>
            <person name="Glodek A."/>
            <person name="Gong F."/>
            <person name="Gorrell J.H."/>
            <person name="Gu Z."/>
            <person name="Guan P."/>
            <person name="Harris M."/>
            <person name="Harris N.L."/>
            <person name="Harvey D.A."/>
            <person name="Heiman T.J."/>
            <person name="Hernandez J.R."/>
            <person name="Houck J."/>
            <person name="Hostin D."/>
            <person name="Houston K.A."/>
            <person name="Howland T.J."/>
            <person name="Wei M.-H."/>
            <person name="Ibegwam C."/>
            <person name="Jalali M."/>
            <person name="Kalush F."/>
            <person name="Karpen G.H."/>
            <person name="Ke Z."/>
            <person name="Kennison J.A."/>
            <person name="Ketchum K.A."/>
            <person name="Kimmel B.E."/>
            <person name="Kodira C.D."/>
            <person name="Kraft C.L."/>
            <person name="Kravitz S."/>
            <person name="Kulp D."/>
            <person name="Lai Z."/>
            <person name="Lasko P."/>
            <person name="Lei Y."/>
            <person name="Levitsky A.A."/>
            <person name="Li J.H."/>
            <person name="Li Z."/>
            <person name="Liang Y."/>
            <person name="Lin X."/>
            <person name="Liu X."/>
            <person name="Mattei B."/>
            <person name="McIntosh T.C."/>
            <person name="McLeod M.P."/>
            <person name="McPherson D."/>
            <person name="Merkulov G."/>
            <person name="Milshina N.V."/>
            <person name="Mobarry C."/>
            <person name="Morris J."/>
            <person name="Moshrefi A."/>
            <person name="Mount S.M."/>
            <person name="Moy M."/>
            <person name="Murphy B."/>
            <person name="Murphy L."/>
            <person name="Muzny D.M."/>
            <person name="Nelson D.L."/>
            <person name="Nelson D.R."/>
            <person name="Nelson K.A."/>
            <person name="Nixon K."/>
            <person name="Nusskern D.R."/>
            <person name="Pacleb J.M."/>
            <person name="Palazzolo M."/>
            <person name="Pittman G.S."/>
            <person name="Pan S."/>
            <person name="Pollard J."/>
            <person name="Puri V."/>
            <person name="Reese M.G."/>
            <person name="Reinert K."/>
            <person name="Remington K."/>
            <person name="Saunders R.D.C."/>
            <person name="Scheeler F."/>
            <person name="Shen H."/>
            <person name="Shue B.C."/>
            <person name="Siden-Kiamos I."/>
            <person name="Simpson M."/>
            <person name="Skupski M.P."/>
            <person name="Smith T.J."/>
            <person name="Spier E."/>
            <person name="Spradling A.C."/>
            <person name="Stapleton M."/>
            <person name="Strong R."/>
            <person name="Sun E."/>
            <person name="Svirskas R."/>
            <person name="Tector C."/>
            <person name="Turner R."/>
            <person name="Venter E."/>
            <person name="Wang A.H."/>
            <person name="Wang X."/>
            <person name="Wang Z.-Y."/>
            <person name="Wassarman D.A."/>
            <person name="Weinstock G.M."/>
            <person name="Weissenbach J."/>
            <person name="Williams S.M."/>
            <person name="Woodage T."/>
            <person name="Worley K.C."/>
            <person name="Wu D."/>
            <person name="Yang S."/>
            <person name="Yao Q.A."/>
            <person name="Ye J."/>
            <person name="Yeh R.-F."/>
            <person name="Zaveri J.S."/>
            <person name="Zhan M."/>
            <person name="Zhang G."/>
            <person name="Zhao Q."/>
            <person name="Zheng L."/>
            <person name="Zheng X.H."/>
            <person name="Zhong F.N."/>
            <person name="Zhong W."/>
            <person name="Zhou X."/>
            <person name="Zhu S.C."/>
            <person name="Zhu X."/>
            <person name="Smith H.O."/>
            <person name="Gibbs R.A."/>
            <person name="Myers E.W."/>
            <person name="Rubin G.M."/>
            <person name="Venter J.C."/>
        </authorList>
    </citation>
    <scope>NUCLEOTIDE SEQUENCE [LARGE SCALE GENOMIC DNA]</scope>
    <source>
        <strain>Berkeley</strain>
    </source>
</reference>
<reference key="5">
    <citation type="journal article" date="2002" name="Genome Biol.">
        <title>Annotation of the Drosophila melanogaster euchromatic genome: a systematic review.</title>
        <authorList>
            <person name="Misra S."/>
            <person name="Crosby M.A."/>
            <person name="Mungall C.J."/>
            <person name="Matthews B.B."/>
            <person name="Campbell K.S."/>
            <person name="Hradecky P."/>
            <person name="Huang Y."/>
            <person name="Kaminker J.S."/>
            <person name="Millburn G.H."/>
            <person name="Prochnik S.E."/>
            <person name="Smith C.D."/>
            <person name="Tupy J.L."/>
            <person name="Whitfield E.J."/>
            <person name="Bayraktaroglu L."/>
            <person name="Berman B.P."/>
            <person name="Bettencourt B.R."/>
            <person name="Celniker S.E."/>
            <person name="de Grey A.D.N.J."/>
            <person name="Drysdale R.A."/>
            <person name="Harris N.L."/>
            <person name="Richter J."/>
            <person name="Russo S."/>
            <person name="Schroeder A.J."/>
            <person name="Shu S.Q."/>
            <person name="Stapleton M."/>
            <person name="Yamada C."/>
            <person name="Ashburner M."/>
            <person name="Gelbart W.M."/>
            <person name="Rubin G.M."/>
            <person name="Lewis S.E."/>
        </authorList>
    </citation>
    <scope>GENOME REANNOTATION</scope>
    <scope>ALTERNATIVE SPLICING</scope>
    <source>
        <strain>Berkeley</strain>
    </source>
</reference>
<comment type="function">
    <text evidence="5">Circadian regulator that acts as a transcription factor and generates a rhythmic output with a period of about 24 hours. Oscillates in antiphase to the cycling observed for period (PER) and timeless (TIM). According to PubMed:9742131, reaches peak abundance within several hours of the dark-light transition at ZT0 (zeitgeber 0), whereas PubMed:9616122 describes bimodal oscillating expression with maximum at ZT5 and ZT23. Clock-cycle heterodimers activate cycling transcription of PER and TIM by binding to the E-box (5'-CACGTG-3') present in their promoters. Once induced, Period and Timeless block Clock's ability to transactivate their promoters.</text>
</comment>
<comment type="subunit">
    <text>Efficient DNA binding requires dimerization with another bHLH protein. Forms a heterodimer with Cycle.</text>
</comment>
<comment type="interaction">
    <interactant intactId="EBI-143834">
        <id>O61735</id>
    </interactant>
    <interactant intactId="EBI-93115">
        <id>P08181</id>
        <label>CkIIalpha</label>
    </interactant>
    <organismsDiffer>false</organismsDiffer>
    <experiments>2</experiments>
</comment>
<comment type="interaction">
    <interactant intactId="EBI-143834">
        <id>O61735</id>
    </interactant>
    <interactant intactId="EBI-87683">
        <id>O61734</id>
        <label>cyc</label>
    </interactant>
    <organismsDiffer>false</organismsDiffer>
    <experiments>3</experiments>
</comment>
<comment type="subcellular location">
    <subcellularLocation>
        <location evidence="3">Nucleus</location>
    </subcellularLocation>
</comment>
<comment type="alternative products">
    <event type="alternative splicing"/>
    <isoform>
        <id>O61735-1</id>
        <name>D</name>
        <sequence type="displayed"/>
    </isoform>
    <isoform>
        <id>O61735-2</id>
        <name>A</name>
        <sequence type="described" ref="VSP_010320"/>
    </isoform>
    <isoform>
        <id>O61735-3</id>
        <name>F</name>
        <sequence type="described" ref="VSP_026493"/>
    </isoform>
</comment>
<comment type="tissue specificity">
    <text>Widely expressed. Found in head, body, and appendage fractions.</text>
</comment>
<comment type="domain">
    <text>Contains three polyglutamine repeats which could correspond to the transactivation domain. The length of the repeats is polymorphic. In the arrhythmic mutant JRK, deletion of this region leads to the loss of circadian rhythmicity and altered light response.</text>
</comment>
<comment type="polymorphism">
    <text>The variability in length of the polyglutamine stretch is due to polymorphism of this region. Variant B encodes two conceptual proteins, the first consists only of the bHLH domain, the other consists of the PAS-1 and all C-terminal domains. Variant B is expressed weakly at all the times of the day, and it cycles in phase with the full-length form.</text>
</comment>
<proteinExistence type="evidence at protein level"/>
<sequence>MDDESDDKDDTKSFLCRKSRNLSEKKRRDQFNSLVNDLSALISTSSRKMDKSTVLKSTIAFLKNHNEATDRSKVFEIQQDWKPAFLSNDEYTHLMLESLDGFMMVFSSMGSIFYASESITSQLGYLPQDLYNMTIYDLAYEMDHEALLNIFMNPTPVIEPRQTDISSSNQITFYTHLRRGGMEKVDANAYELVKFVGYFRNDTNTSTGSSSEVSNGSNGQPAVLPRIFQQNPNAEVDKKLVFVGTGRVQNPQLIREMSIIDPTSNEFTSKHSMEWKFLFLDHRAPPIIGYMPFEVLGTSGYDYYHFDDLDSIVACHEELRQTGEGKSCYYRFLTKGQQWIWLQTDYYVSYHQFNSKPDYVVCTHKVVSYAEVLKDSRKEGQKSGNSNSITNNGSSKVIASTGTSSKSASATTTLRDFELSSQNLDSTLLGNSLASLGTETAATSPAVDSSPMWSASAVQPSGSCQINPLKTSRPASSYGNISSTGISPKAKRKCYFYNNRGNDSDSTSMSTDSVTSRQSMMTHVSSQSQRQRSHHREHHRENHHNQSHHHMQQQQQHQNQQQQHQQHQQLQQQLQHTVGTPKMVPLLPIASTQIMAGNACQFPQPAYPLASPQLVAPTFLEPPQYLTAIPMQPVIAPFPVAPVLSPLPVQSQTDMLPDTVVMTPTQSQLQDQLQRKHDELQKLILQQQNELRIVSEQLLLSRYTYLQPMMSMGFAPGNMTAAAVGNLGASGQRGLNFTGSNAVQPQFNQYGFALNSEQMLNQQDQQMMMQQQQNLHTQHQHNLQQQHQSHSQLQQHTQQQHQQQQQQQQQQQQQQQQQQQQQQQQQQQQQQQQQLQLQQQNDILLREDIDDIDAFLNLSPLHSLGSQSTINPFNSSSNNNNQSYNGGSNLNNGNQNNNNRSSNPPQNNNEDSLLSCMQMATESSPSINFHMGISDDGSETQSEDNKMMHTSGSNLVQQQQQQQQQQQILQQHQQQSNSFFSSNPFLNSQNQNQNQLPNDLEILPYQMSQEQSQNLFNSPHTAPGSSQ</sequence>
<keyword id="KW-0025">Alternative splicing</keyword>
<keyword id="KW-0090">Biological rhythms</keyword>
<keyword id="KW-0238">DNA-binding</keyword>
<keyword id="KW-0539">Nucleus</keyword>
<keyword id="KW-1185">Reference proteome</keyword>
<keyword id="KW-0677">Repeat</keyword>
<keyword id="KW-0804">Transcription</keyword>
<keyword id="KW-0805">Transcription regulation</keyword>
<feature type="chain" id="PRO_0000127162" description="Circadian locomoter output cycles protein kaput">
    <location>
        <begin position="1"/>
        <end position="1027"/>
    </location>
</feature>
<feature type="domain" description="bHLH" evidence="3">
    <location>
        <begin position="15"/>
        <end position="65"/>
    </location>
</feature>
<feature type="domain" description="PAS 1" evidence="2">
    <location>
        <begin position="88"/>
        <end position="160"/>
    </location>
</feature>
<feature type="domain" description="PAS 2" evidence="2">
    <location>
        <begin position="255"/>
        <end position="321"/>
    </location>
</feature>
<feature type="region of interest" description="Disordered" evidence="4">
    <location>
        <begin position="377"/>
        <end position="402"/>
    </location>
</feature>
<feature type="region of interest" description="Disordered" evidence="4">
    <location>
        <begin position="443"/>
        <end position="575"/>
    </location>
</feature>
<feature type="region of interest" description="Disordered" evidence="4">
    <location>
        <begin position="765"/>
        <end position="800"/>
    </location>
</feature>
<feature type="region of interest" description="Implicated in the circadian rhythmicity">
    <location>
        <begin position="780"/>
        <end position="1027"/>
    </location>
</feature>
<feature type="region of interest" description="Disordered" evidence="4">
    <location>
        <begin position="869"/>
        <end position="911"/>
    </location>
</feature>
<feature type="region of interest" description="Disordered" evidence="4">
    <location>
        <begin position="926"/>
        <end position="1027"/>
    </location>
</feature>
<feature type="compositionally biased region" description="Low complexity" evidence="4">
    <location>
        <begin position="383"/>
        <end position="402"/>
    </location>
</feature>
<feature type="compositionally biased region" description="Polar residues" evidence="4">
    <location>
        <begin position="443"/>
        <end position="486"/>
    </location>
</feature>
<feature type="compositionally biased region" description="Low complexity" evidence="4">
    <location>
        <begin position="504"/>
        <end position="516"/>
    </location>
</feature>
<feature type="compositionally biased region" description="Low complexity" evidence="4">
    <location>
        <begin position="552"/>
        <end position="575"/>
    </location>
</feature>
<feature type="compositionally biased region" description="Low complexity" evidence="4">
    <location>
        <begin position="871"/>
        <end position="909"/>
    </location>
</feature>
<feature type="compositionally biased region" description="Low complexity" evidence="4">
    <location>
        <begin position="951"/>
        <end position="995"/>
    </location>
</feature>
<feature type="compositionally biased region" description="Polar residues" evidence="4">
    <location>
        <begin position="1006"/>
        <end position="1027"/>
    </location>
</feature>
<feature type="site" description="Interaction with E-box DNA" evidence="1">
    <location>
        <position position="20"/>
    </location>
</feature>
<feature type="site" description="Interaction with E-box DNA" evidence="1">
    <location>
        <position position="24"/>
    </location>
</feature>
<feature type="site" description="Interaction with E-box DNA" evidence="1">
    <location>
        <position position="28"/>
    </location>
</feature>
<feature type="splice variant" id="VSP_026493" description="In isoform F." evidence="8">
    <location>
        <begin position="2"/>
        <end position="67"/>
    </location>
</feature>
<feature type="splice variant" id="VSP_010320" description="In isoform A." evidence="6 7">
    <location>
        <begin position="13"/>
        <end position="16"/>
    </location>
</feature>
<feature type="sequence variant" description="In variant B.">
    <location>
        <begin position="802"/>
        <end position="809"/>
    </location>
</feature>
<feature type="sequence conflict" description="In Ref. 2; AAC62234." evidence="8" ref="2">
    <original>N</original>
    <variation>D</variation>
    <location>
        <position position="36"/>
    </location>
</feature>
<feature type="sequence conflict" description="In Ref. 1; AAC39101." evidence="8" ref="1">
    <original>N</original>
    <variation>K</variation>
    <location>
        <position position="132"/>
    </location>
</feature>
<feature type="sequence conflict" description="In Ref. 3; AAD10630." evidence="8" ref="3">
    <original>N</original>
    <variation>S</variation>
    <location>
        <position position="559"/>
    </location>
</feature>
<feature type="sequence conflict" description="In Ref. 1; AAC39101 and 3; AAD10630." evidence="8" ref="1 3">
    <original>L</original>
    <variation>I</variation>
    <location>
        <position position="609"/>
    </location>
</feature>
<feature type="sequence conflict" description="In Ref. 1; AAC39101." evidence="8" ref="1">
    <location>
        <begin position="827"/>
        <end position="834"/>
    </location>
</feature>
<feature type="sequence conflict" description="In Ref. 1; AAC39101 and 3; AAD10630." evidence="8" ref="1 3">
    <original>C</original>
    <variation>Y</variation>
    <location>
        <position position="916"/>
    </location>
</feature>
<protein>
    <recommendedName>
        <fullName>Circadian locomoter output cycles protein kaput</fullName>
    </recommendedName>
    <alternativeName>
        <fullName>dCLOCK</fullName>
    </alternativeName>
    <alternativeName>
        <fullName>dPAS1</fullName>
    </alternativeName>
</protein>
<evidence type="ECO:0000250" key="1">
    <source>
        <dbReference type="UniProtKB" id="O15516"/>
    </source>
</evidence>
<evidence type="ECO:0000255" key="2">
    <source>
        <dbReference type="PROSITE-ProRule" id="PRU00140"/>
    </source>
</evidence>
<evidence type="ECO:0000255" key="3">
    <source>
        <dbReference type="PROSITE-ProRule" id="PRU00981"/>
    </source>
</evidence>
<evidence type="ECO:0000256" key="4">
    <source>
        <dbReference type="SAM" id="MobiDB-lite"/>
    </source>
</evidence>
<evidence type="ECO:0000269" key="5">
    <source>
    </source>
</evidence>
<evidence type="ECO:0000303" key="6">
    <source>
    </source>
</evidence>
<evidence type="ECO:0000303" key="7">
    <source>
    </source>
</evidence>
<evidence type="ECO:0000305" key="8"/>